<gene>
    <name evidence="1" type="primary">sucC</name>
    <name type="ordered locus">azo3333</name>
</gene>
<protein>
    <recommendedName>
        <fullName evidence="1">Succinate--CoA ligase [ADP-forming] subunit beta</fullName>
        <ecNumber evidence="1">6.2.1.5</ecNumber>
    </recommendedName>
    <alternativeName>
        <fullName evidence="1">Succinyl-CoA synthetase subunit beta</fullName>
        <shortName evidence="1">SCS-beta</shortName>
    </alternativeName>
</protein>
<sequence>MKIHEYQAKEVLRKYGVVTPRGIPCFSVDEAVKAAEELGGKIWVVKAQIHAGGRGKGGGVKLGKSLDEVRTLAGQILGMQLVTHQTGPEGQKVRRLLIEEGADIKKEYYVAALTDRATQKVAMMASSEGGMDIEEVAHNTPEKIIKVFVDPLAGLTDAQAIELAKGIGVPEASIPQAVDTFKKLYTCYMETDASLAEINPLILEGNGNIKALDAKFNFDSNALFRHPEIVAYRDLDEEDADEIEASKFDLAYISLDGNIGCLVNGAGLAMATMDTIKLFGAEPANFLDVGGGATTEKVTEAFKIMLKNPKVKGILVNIFGGIMKCDTIATGVVAAAKEVNLSVPLVVRMKGTNEDLGKKILAESGLPIISADTMAEAATKIVAEVK</sequence>
<organism>
    <name type="scientific">Azoarcus sp. (strain BH72)</name>
    <dbReference type="NCBI Taxonomy" id="418699"/>
    <lineage>
        <taxon>Bacteria</taxon>
        <taxon>Pseudomonadati</taxon>
        <taxon>Pseudomonadota</taxon>
        <taxon>Betaproteobacteria</taxon>
        <taxon>Rhodocyclales</taxon>
        <taxon>Zoogloeaceae</taxon>
        <taxon>Azoarcus</taxon>
    </lineage>
</organism>
<accession>A1KAU3</accession>
<comment type="function">
    <text evidence="1">Succinyl-CoA synthetase functions in the citric acid cycle (TCA), coupling the hydrolysis of succinyl-CoA to the synthesis of either ATP or GTP and thus represents the only step of substrate-level phosphorylation in the TCA. The beta subunit provides nucleotide specificity of the enzyme and binds the substrate succinate, while the binding sites for coenzyme A and phosphate are found in the alpha subunit.</text>
</comment>
<comment type="catalytic activity">
    <reaction evidence="1">
        <text>succinate + ATP + CoA = succinyl-CoA + ADP + phosphate</text>
        <dbReference type="Rhea" id="RHEA:17661"/>
        <dbReference type="ChEBI" id="CHEBI:30031"/>
        <dbReference type="ChEBI" id="CHEBI:30616"/>
        <dbReference type="ChEBI" id="CHEBI:43474"/>
        <dbReference type="ChEBI" id="CHEBI:57287"/>
        <dbReference type="ChEBI" id="CHEBI:57292"/>
        <dbReference type="ChEBI" id="CHEBI:456216"/>
        <dbReference type="EC" id="6.2.1.5"/>
    </reaction>
    <physiologicalReaction direction="right-to-left" evidence="1">
        <dbReference type="Rhea" id="RHEA:17663"/>
    </physiologicalReaction>
</comment>
<comment type="catalytic activity">
    <reaction evidence="1">
        <text>GTP + succinate + CoA = succinyl-CoA + GDP + phosphate</text>
        <dbReference type="Rhea" id="RHEA:22120"/>
        <dbReference type="ChEBI" id="CHEBI:30031"/>
        <dbReference type="ChEBI" id="CHEBI:37565"/>
        <dbReference type="ChEBI" id="CHEBI:43474"/>
        <dbReference type="ChEBI" id="CHEBI:57287"/>
        <dbReference type="ChEBI" id="CHEBI:57292"/>
        <dbReference type="ChEBI" id="CHEBI:58189"/>
    </reaction>
    <physiologicalReaction direction="right-to-left" evidence="1">
        <dbReference type="Rhea" id="RHEA:22122"/>
    </physiologicalReaction>
</comment>
<comment type="cofactor">
    <cofactor evidence="1">
        <name>Mg(2+)</name>
        <dbReference type="ChEBI" id="CHEBI:18420"/>
    </cofactor>
    <text evidence="1">Binds 1 Mg(2+) ion per subunit.</text>
</comment>
<comment type="pathway">
    <text evidence="1">Carbohydrate metabolism; tricarboxylic acid cycle; succinate from succinyl-CoA (ligase route): step 1/1.</text>
</comment>
<comment type="subunit">
    <text evidence="1">Heterotetramer of two alpha and two beta subunits.</text>
</comment>
<comment type="similarity">
    <text evidence="1">Belongs to the succinate/malate CoA ligase beta subunit family.</text>
</comment>
<reference key="1">
    <citation type="journal article" date="2006" name="Nat. Biotechnol.">
        <title>Complete genome of the mutualistic, N2-fixing grass endophyte Azoarcus sp. strain BH72.</title>
        <authorList>
            <person name="Krause A."/>
            <person name="Ramakumar A."/>
            <person name="Bartels D."/>
            <person name="Battistoni F."/>
            <person name="Bekel T."/>
            <person name="Boch J."/>
            <person name="Boehm M."/>
            <person name="Friedrich F."/>
            <person name="Hurek T."/>
            <person name="Krause L."/>
            <person name="Linke B."/>
            <person name="McHardy A.C."/>
            <person name="Sarkar A."/>
            <person name="Schneiker S."/>
            <person name="Syed A.A."/>
            <person name="Thauer R."/>
            <person name="Vorhoelter F.-J."/>
            <person name="Weidner S."/>
            <person name="Puehler A."/>
            <person name="Reinhold-Hurek B."/>
            <person name="Kaiser O."/>
            <person name="Goesmann A."/>
        </authorList>
    </citation>
    <scope>NUCLEOTIDE SEQUENCE [LARGE SCALE GENOMIC DNA]</scope>
    <source>
        <strain>BH72</strain>
    </source>
</reference>
<name>SUCC_AZOSB</name>
<dbReference type="EC" id="6.2.1.5" evidence="1"/>
<dbReference type="EMBL" id="AM406670">
    <property type="protein sequence ID" value="CAL95949.1"/>
    <property type="molecule type" value="Genomic_DNA"/>
</dbReference>
<dbReference type="RefSeq" id="WP_011767056.1">
    <property type="nucleotide sequence ID" value="NC_008702.1"/>
</dbReference>
<dbReference type="SMR" id="A1KAU3"/>
<dbReference type="STRING" id="62928.azo3333"/>
<dbReference type="KEGG" id="aoa:dqs_3471"/>
<dbReference type="KEGG" id="azo:azo3333"/>
<dbReference type="eggNOG" id="COG0045">
    <property type="taxonomic scope" value="Bacteria"/>
</dbReference>
<dbReference type="HOGENOM" id="CLU_037430_0_2_4"/>
<dbReference type="OrthoDB" id="9802602at2"/>
<dbReference type="UniPathway" id="UPA00223">
    <property type="reaction ID" value="UER00999"/>
</dbReference>
<dbReference type="Proteomes" id="UP000002588">
    <property type="component" value="Chromosome"/>
</dbReference>
<dbReference type="GO" id="GO:0005829">
    <property type="term" value="C:cytosol"/>
    <property type="evidence" value="ECO:0007669"/>
    <property type="project" value="TreeGrafter"/>
</dbReference>
<dbReference type="GO" id="GO:0042709">
    <property type="term" value="C:succinate-CoA ligase complex"/>
    <property type="evidence" value="ECO:0007669"/>
    <property type="project" value="TreeGrafter"/>
</dbReference>
<dbReference type="GO" id="GO:0005524">
    <property type="term" value="F:ATP binding"/>
    <property type="evidence" value="ECO:0007669"/>
    <property type="project" value="UniProtKB-UniRule"/>
</dbReference>
<dbReference type="GO" id="GO:0000287">
    <property type="term" value="F:magnesium ion binding"/>
    <property type="evidence" value="ECO:0007669"/>
    <property type="project" value="UniProtKB-UniRule"/>
</dbReference>
<dbReference type="GO" id="GO:0004775">
    <property type="term" value="F:succinate-CoA ligase (ADP-forming) activity"/>
    <property type="evidence" value="ECO:0007669"/>
    <property type="project" value="UniProtKB-UniRule"/>
</dbReference>
<dbReference type="GO" id="GO:0004776">
    <property type="term" value="F:succinate-CoA ligase (GDP-forming) activity"/>
    <property type="evidence" value="ECO:0007669"/>
    <property type="project" value="RHEA"/>
</dbReference>
<dbReference type="GO" id="GO:0006104">
    <property type="term" value="P:succinyl-CoA metabolic process"/>
    <property type="evidence" value="ECO:0007669"/>
    <property type="project" value="TreeGrafter"/>
</dbReference>
<dbReference type="GO" id="GO:0006099">
    <property type="term" value="P:tricarboxylic acid cycle"/>
    <property type="evidence" value="ECO:0007669"/>
    <property type="project" value="UniProtKB-UniRule"/>
</dbReference>
<dbReference type="FunFam" id="3.30.1490.20:FF:000002">
    <property type="entry name" value="Succinate--CoA ligase [ADP-forming] subunit beta"/>
    <property type="match status" value="1"/>
</dbReference>
<dbReference type="FunFam" id="3.30.470.20:FF:000002">
    <property type="entry name" value="Succinate--CoA ligase [ADP-forming] subunit beta"/>
    <property type="match status" value="1"/>
</dbReference>
<dbReference type="FunFam" id="3.40.50.261:FF:000001">
    <property type="entry name" value="Succinate--CoA ligase [ADP-forming] subunit beta"/>
    <property type="match status" value="1"/>
</dbReference>
<dbReference type="Gene3D" id="3.30.1490.20">
    <property type="entry name" value="ATP-grasp fold, A domain"/>
    <property type="match status" value="1"/>
</dbReference>
<dbReference type="Gene3D" id="3.30.470.20">
    <property type="entry name" value="ATP-grasp fold, B domain"/>
    <property type="match status" value="1"/>
</dbReference>
<dbReference type="Gene3D" id="3.40.50.261">
    <property type="entry name" value="Succinyl-CoA synthetase domains"/>
    <property type="match status" value="1"/>
</dbReference>
<dbReference type="HAMAP" id="MF_00558">
    <property type="entry name" value="Succ_CoA_beta"/>
    <property type="match status" value="1"/>
</dbReference>
<dbReference type="InterPro" id="IPR011761">
    <property type="entry name" value="ATP-grasp"/>
</dbReference>
<dbReference type="InterPro" id="IPR013650">
    <property type="entry name" value="ATP-grasp_succ-CoA_synth-type"/>
</dbReference>
<dbReference type="InterPro" id="IPR013815">
    <property type="entry name" value="ATP_grasp_subdomain_1"/>
</dbReference>
<dbReference type="InterPro" id="IPR017866">
    <property type="entry name" value="Succ-CoA_synthase_bsu_CS"/>
</dbReference>
<dbReference type="InterPro" id="IPR005811">
    <property type="entry name" value="SUCC_ACL_C"/>
</dbReference>
<dbReference type="InterPro" id="IPR005809">
    <property type="entry name" value="Succ_CoA_ligase-like_bsu"/>
</dbReference>
<dbReference type="InterPro" id="IPR016102">
    <property type="entry name" value="Succinyl-CoA_synth-like"/>
</dbReference>
<dbReference type="NCBIfam" id="NF001913">
    <property type="entry name" value="PRK00696.1"/>
    <property type="match status" value="1"/>
</dbReference>
<dbReference type="NCBIfam" id="TIGR01016">
    <property type="entry name" value="sucCoAbeta"/>
    <property type="match status" value="1"/>
</dbReference>
<dbReference type="PANTHER" id="PTHR11815:SF10">
    <property type="entry name" value="SUCCINATE--COA LIGASE [GDP-FORMING] SUBUNIT BETA, MITOCHONDRIAL"/>
    <property type="match status" value="1"/>
</dbReference>
<dbReference type="PANTHER" id="PTHR11815">
    <property type="entry name" value="SUCCINYL-COA SYNTHETASE BETA CHAIN"/>
    <property type="match status" value="1"/>
</dbReference>
<dbReference type="Pfam" id="PF08442">
    <property type="entry name" value="ATP-grasp_2"/>
    <property type="match status" value="1"/>
</dbReference>
<dbReference type="Pfam" id="PF00549">
    <property type="entry name" value="Ligase_CoA"/>
    <property type="match status" value="1"/>
</dbReference>
<dbReference type="PIRSF" id="PIRSF001554">
    <property type="entry name" value="SucCS_beta"/>
    <property type="match status" value="1"/>
</dbReference>
<dbReference type="SUPFAM" id="SSF56059">
    <property type="entry name" value="Glutathione synthetase ATP-binding domain-like"/>
    <property type="match status" value="1"/>
</dbReference>
<dbReference type="SUPFAM" id="SSF52210">
    <property type="entry name" value="Succinyl-CoA synthetase domains"/>
    <property type="match status" value="1"/>
</dbReference>
<dbReference type="PROSITE" id="PS50975">
    <property type="entry name" value="ATP_GRASP"/>
    <property type="match status" value="1"/>
</dbReference>
<dbReference type="PROSITE" id="PS01217">
    <property type="entry name" value="SUCCINYL_COA_LIG_3"/>
    <property type="match status" value="1"/>
</dbReference>
<proteinExistence type="inferred from homology"/>
<evidence type="ECO:0000255" key="1">
    <source>
        <dbReference type="HAMAP-Rule" id="MF_00558"/>
    </source>
</evidence>
<feature type="chain" id="PRO_1000082002" description="Succinate--CoA ligase [ADP-forming] subunit beta">
    <location>
        <begin position="1"/>
        <end position="386"/>
    </location>
</feature>
<feature type="domain" description="ATP-grasp" evidence="1">
    <location>
        <begin position="9"/>
        <end position="244"/>
    </location>
</feature>
<feature type="binding site" evidence="1">
    <location>
        <position position="46"/>
    </location>
    <ligand>
        <name>ATP</name>
        <dbReference type="ChEBI" id="CHEBI:30616"/>
    </ligand>
</feature>
<feature type="binding site" evidence="1">
    <location>
        <begin position="53"/>
        <end position="55"/>
    </location>
    <ligand>
        <name>ATP</name>
        <dbReference type="ChEBI" id="CHEBI:30616"/>
    </ligand>
</feature>
<feature type="binding site" evidence="1">
    <location>
        <position position="99"/>
    </location>
    <ligand>
        <name>ATP</name>
        <dbReference type="ChEBI" id="CHEBI:30616"/>
    </ligand>
</feature>
<feature type="binding site" evidence="1">
    <location>
        <position position="102"/>
    </location>
    <ligand>
        <name>ATP</name>
        <dbReference type="ChEBI" id="CHEBI:30616"/>
    </ligand>
</feature>
<feature type="binding site" evidence="1">
    <location>
        <position position="107"/>
    </location>
    <ligand>
        <name>ATP</name>
        <dbReference type="ChEBI" id="CHEBI:30616"/>
    </ligand>
</feature>
<feature type="binding site" evidence="1">
    <location>
        <position position="199"/>
    </location>
    <ligand>
        <name>Mg(2+)</name>
        <dbReference type="ChEBI" id="CHEBI:18420"/>
    </ligand>
</feature>
<feature type="binding site" evidence="1">
    <location>
        <position position="213"/>
    </location>
    <ligand>
        <name>Mg(2+)</name>
        <dbReference type="ChEBI" id="CHEBI:18420"/>
    </ligand>
</feature>
<feature type="binding site" evidence="1">
    <location>
        <position position="264"/>
    </location>
    <ligand>
        <name>substrate</name>
        <note>ligand shared with subunit alpha</note>
    </ligand>
</feature>
<feature type="binding site" evidence="1">
    <location>
        <begin position="321"/>
        <end position="323"/>
    </location>
    <ligand>
        <name>substrate</name>
        <note>ligand shared with subunit alpha</note>
    </ligand>
</feature>
<keyword id="KW-0067">ATP-binding</keyword>
<keyword id="KW-0436">Ligase</keyword>
<keyword id="KW-0460">Magnesium</keyword>
<keyword id="KW-0479">Metal-binding</keyword>
<keyword id="KW-0547">Nucleotide-binding</keyword>
<keyword id="KW-1185">Reference proteome</keyword>
<keyword id="KW-0816">Tricarboxylic acid cycle</keyword>